<name>ZN621_HUMAN</name>
<keyword id="KW-0025">Alternative splicing</keyword>
<keyword id="KW-0238">DNA-binding</keyword>
<keyword id="KW-0479">Metal-binding</keyword>
<keyword id="KW-0539">Nucleus</keyword>
<keyword id="KW-1267">Proteomics identification</keyword>
<keyword id="KW-1185">Reference proteome</keyword>
<keyword id="KW-0677">Repeat</keyword>
<keyword id="KW-0804">Transcription</keyword>
<keyword id="KW-0805">Transcription regulation</keyword>
<keyword id="KW-0862">Zinc</keyword>
<keyword id="KW-0863">Zinc-finger</keyword>
<proteinExistence type="evidence at protein level"/>
<gene>
    <name type="primary">ZNF621</name>
</gene>
<sequence>MLQTTWPQESVTFEDVAVYFTQNQWASLDPAQRALYGEVMLENYANVASLVAFPFPKPALISHLERGEAPWGPDPWDTEILRGISQGGESWIKNEGLVIKQEASEETELHRMPVGGLLRNVSQHFDFKRKALKQTFNLNPNLILRGGMKFYECKECGKIFRYNSKLIRHQMSHTGEKPFKCKECGKAFKSSYDCIVHEKNHIGEGPYECKECGKGLSSNTALTQHQRIHTGEKPYECKECGKAFRRSAAYLQHQRLHTGEKLYKCKECWKAFGCRSLFIVHQRIHTGEKPYQCKECGKAFTQKIASIQHQRVHTGEKPYECKVCGKAFKWYGSFVQHQKLHPVEKKPVKVLGPSLVSPQCSSPAIPPVLLQGSCSASAVAVPSLTFPHAVLIPTSGNFFMLLPTSGIPSSSAQIVRVFQGLTPTVKPSPVILTPSSHSS</sequence>
<comment type="function">
    <text>May be involved in transcriptional regulation.</text>
</comment>
<comment type="interaction">
    <interactant intactId="EBI-21783898">
        <id>Q6ZSS3</id>
    </interactant>
    <interactant intactId="EBI-78139">
        <id>Q13263</id>
        <label>TRIM28</label>
    </interactant>
    <organismsDiffer>false</organismsDiffer>
    <experiments>2</experiments>
</comment>
<comment type="subcellular location">
    <subcellularLocation>
        <location evidence="4">Nucleus</location>
    </subcellularLocation>
</comment>
<comment type="alternative products">
    <event type="alternative splicing"/>
    <isoform>
        <id>Q6ZSS3-1</id>
        <name>1</name>
        <sequence type="displayed"/>
    </isoform>
    <isoform>
        <id>Q6ZSS3-2</id>
        <name>2</name>
        <sequence type="described" ref="VSP_016041 VSP_016042"/>
    </isoform>
</comment>
<comment type="similarity">
    <text evidence="4">Belongs to the krueppel C2H2-type zinc-finger protein family.</text>
</comment>
<dbReference type="EMBL" id="AK074366">
    <property type="protein sequence ID" value="BAB85061.1"/>
    <property type="molecule type" value="mRNA"/>
</dbReference>
<dbReference type="EMBL" id="AK127181">
    <property type="protein sequence ID" value="BAC86873.1"/>
    <property type="molecule type" value="mRNA"/>
</dbReference>
<dbReference type="EMBL" id="CR749268">
    <property type="protein sequence ID" value="CAH18124.1"/>
    <property type="molecule type" value="mRNA"/>
</dbReference>
<dbReference type="EMBL" id="BC101619">
    <property type="protein sequence ID" value="AAI01620.1"/>
    <property type="molecule type" value="mRNA"/>
</dbReference>
<dbReference type="EMBL" id="BC113415">
    <property type="protein sequence ID" value="AAI13416.1"/>
    <property type="molecule type" value="mRNA"/>
</dbReference>
<dbReference type="CCDS" id="CCDS2693.1">
    <molecule id="Q6ZSS3-1"/>
</dbReference>
<dbReference type="CCDS" id="CCDS74920.1">
    <molecule id="Q6ZSS3-2"/>
</dbReference>
<dbReference type="RefSeq" id="NP_001091884.1">
    <molecule id="Q6ZSS3-1"/>
    <property type="nucleotide sequence ID" value="NM_001098414.3"/>
</dbReference>
<dbReference type="RefSeq" id="NP_001274174.1">
    <molecule id="Q6ZSS3-2"/>
    <property type="nucleotide sequence ID" value="NM_001287245.2"/>
</dbReference>
<dbReference type="RefSeq" id="NP_940886.1">
    <molecule id="Q6ZSS3-1"/>
    <property type="nucleotide sequence ID" value="NM_198484.5"/>
</dbReference>
<dbReference type="SMR" id="Q6ZSS3"/>
<dbReference type="BioGRID" id="130064">
    <property type="interactions" value="7"/>
</dbReference>
<dbReference type="FunCoup" id="Q6ZSS3">
    <property type="interactions" value="151"/>
</dbReference>
<dbReference type="IntAct" id="Q6ZSS3">
    <property type="interactions" value="6"/>
</dbReference>
<dbReference type="STRING" id="9606.ENSP00000340841"/>
<dbReference type="iPTMnet" id="Q6ZSS3"/>
<dbReference type="PhosphoSitePlus" id="Q6ZSS3"/>
<dbReference type="BioMuta" id="ZNF621"/>
<dbReference type="DMDM" id="74762406"/>
<dbReference type="jPOST" id="Q6ZSS3"/>
<dbReference type="MassIVE" id="Q6ZSS3"/>
<dbReference type="PaxDb" id="9606-ENSP00000340841"/>
<dbReference type="PeptideAtlas" id="Q6ZSS3"/>
<dbReference type="ProteomicsDB" id="68235">
    <molecule id="Q6ZSS3-1"/>
</dbReference>
<dbReference type="ProteomicsDB" id="68236">
    <molecule id="Q6ZSS3-2"/>
</dbReference>
<dbReference type="Antibodypedia" id="12279">
    <property type="antibodies" value="117 antibodies from 20 providers"/>
</dbReference>
<dbReference type="DNASU" id="285268"/>
<dbReference type="Ensembl" id="ENST00000310898.5">
    <molecule id="Q6ZSS3-2"/>
    <property type="protein sequence ID" value="ENSP00000312144.1"/>
    <property type="gene ID" value="ENSG00000172888.12"/>
</dbReference>
<dbReference type="Ensembl" id="ENST00000339296.10">
    <molecule id="Q6ZSS3-1"/>
    <property type="protein sequence ID" value="ENSP00000340841.5"/>
    <property type="gene ID" value="ENSG00000172888.12"/>
</dbReference>
<dbReference type="Ensembl" id="ENST00000403205.6">
    <molecule id="Q6ZSS3-1"/>
    <property type="protein sequence ID" value="ENSP00000386051.2"/>
    <property type="gene ID" value="ENSG00000172888.12"/>
</dbReference>
<dbReference type="GeneID" id="285268"/>
<dbReference type="KEGG" id="hsa:285268"/>
<dbReference type="MANE-Select" id="ENST00000339296.10">
    <property type="protein sequence ID" value="ENSP00000340841.5"/>
    <property type="RefSeq nucleotide sequence ID" value="NM_198484.5"/>
    <property type="RefSeq protein sequence ID" value="NP_940886.1"/>
</dbReference>
<dbReference type="UCSC" id="uc003ckm.4">
    <molecule id="Q6ZSS3-1"/>
    <property type="organism name" value="human"/>
</dbReference>
<dbReference type="AGR" id="HGNC:24787"/>
<dbReference type="CTD" id="285268"/>
<dbReference type="GeneCards" id="ZNF621"/>
<dbReference type="HGNC" id="HGNC:24787">
    <property type="gene designation" value="ZNF621"/>
</dbReference>
<dbReference type="HPA" id="ENSG00000172888">
    <property type="expression patterns" value="Low tissue specificity"/>
</dbReference>
<dbReference type="neXtProt" id="NX_Q6ZSS3"/>
<dbReference type="OpenTargets" id="ENSG00000172888"/>
<dbReference type="PharmGKB" id="PA134982950"/>
<dbReference type="VEuPathDB" id="HostDB:ENSG00000172888"/>
<dbReference type="eggNOG" id="KOG1721">
    <property type="taxonomic scope" value="Eukaryota"/>
</dbReference>
<dbReference type="GeneTree" id="ENSGT00940000163271"/>
<dbReference type="InParanoid" id="Q6ZSS3"/>
<dbReference type="OMA" id="FRRNAAY"/>
<dbReference type="OrthoDB" id="10004641at2759"/>
<dbReference type="PAN-GO" id="Q6ZSS3">
    <property type="GO annotations" value="3 GO annotations based on evolutionary models"/>
</dbReference>
<dbReference type="PhylomeDB" id="Q6ZSS3"/>
<dbReference type="TreeFam" id="TF350844"/>
<dbReference type="PathwayCommons" id="Q6ZSS3"/>
<dbReference type="Reactome" id="R-HSA-212436">
    <property type="pathway name" value="Generic Transcription Pathway"/>
</dbReference>
<dbReference type="SignaLink" id="Q6ZSS3"/>
<dbReference type="BioGRID-ORCS" id="285268">
    <property type="hits" value="8 hits in 1177 CRISPR screens"/>
</dbReference>
<dbReference type="GenomeRNAi" id="285268"/>
<dbReference type="Pharos" id="Q6ZSS3">
    <property type="development level" value="Tdark"/>
</dbReference>
<dbReference type="PRO" id="PR:Q6ZSS3"/>
<dbReference type="Proteomes" id="UP000005640">
    <property type="component" value="Chromosome 3"/>
</dbReference>
<dbReference type="RNAct" id="Q6ZSS3">
    <property type="molecule type" value="protein"/>
</dbReference>
<dbReference type="Bgee" id="ENSG00000172888">
    <property type="expression patterns" value="Expressed in endothelial cell and 168 other cell types or tissues"/>
</dbReference>
<dbReference type="ExpressionAtlas" id="Q6ZSS3">
    <property type="expression patterns" value="baseline and differential"/>
</dbReference>
<dbReference type="GO" id="GO:0005634">
    <property type="term" value="C:nucleus"/>
    <property type="evidence" value="ECO:0007669"/>
    <property type="project" value="UniProtKB-SubCell"/>
</dbReference>
<dbReference type="GO" id="GO:0000981">
    <property type="term" value="F:DNA-binding transcription factor activity, RNA polymerase II-specific"/>
    <property type="evidence" value="ECO:0000318"/>
    <property type="project" value="GO_Central"/>
</dbReference>
<dbReference type="GO" id="GO:0000978">
    <property type="term" value="F:RNA polymerase II cis-regulatory region sequence-specific DNA binding"/>
    <property type="evidence" value="ECO:0000318"/>
    <property type="project" value="GO_Central"/>
</dbReference>
<dbReference type="GO" id="GO:0008270">
    <property type="term" value="F:zinc ion binding"/>
    <property type="evidence" value="ECO:0007669"/>
    <property type="project" value="UniProtKB-KW"/>
</dbReference>
<dbReference type="GO" id="GO:0006357">
    <property type="term" value="P:regulation of transcription by RNA polymerase II"/>
    <property type="evidence" value="ECO:0000318"/>
    <property type="project" value="GO_Central"/>
</dbReference>
<dbReference type="CDD" id="cd07765">
    <property type="entry name" value="KRAB_A-box"/>
    <property type="match status" value="1"/>
</dbReference>
<dbReference type="FunFam" id="3.30.160.60:FF:001498">
    <property type="entry name" value="Zinc finger protein 404"/>
    <property type="match status" value="1"/>
</dbReference>
<dbReference type="FunFam" id="3.30.160.60:FF:000737">
    <property type="entry name" value="Zinc finger protein 565"/>
    <property type="match status" value="1"/>
</dbReference>
<dbReference type="FunFam" id="3.30.160.60:FF:000202">
    <property type="entry name" value="Zinc finger protein 574"/>
    <property type="match status" value="1"/>
</dbReference>
<dbReference type="FunFam" id="3.30.160.60:FF:001916">
    <property type="entry name" value="Zinc finger protein 621"/>
    <property type="match status" value="1"/>
</dbReference>
<dbReference type="FunFam" id="3.30.160.60:FF:000609">
    <property type="entry name" value="zinc finger protein 621"/>
    <property type="match status" value="1"/>
</dbReference>
<dbReference type="FunFam" id="3.30.160.60:FF:000815">
    <property type="entry name" value="zinc finger protein 621"/>
    <property type="match status" value="1"/>
</dbReference>
<dbReference type="FunFam" id="3.30.160.60:FF:001179">
    <property type="entry name" value="zinc finger protein 621 isoform X3"/>
    <property type="match status" value="1"/>
</dbReference>
<dbReference type="Gene3D" id="6.10.140.140">
    <property type="match status" value="1"/>
</dbReference>
<dbReference type="Gene3D" id="3.30.160.60">
    <property type="entry name" value="Classic Zinc Finger"/>
    <property type="match status" value="7"/>
</dbReference>
<dbReference type="InterPro" id="IPR001909">
    <property type="entry name" value="KRAB"/>
</dbReference>
<dbReference type="InterPro" id="IPR036051">
    <property type="entry name" value="KRAB_dom_sf"/>
</dbReference>
<dbReference type="InterPro" id="IPR036236">
    <property type="entry name" value="Znf_C2H2_sf"/>
</dbReference>
<dbReference type="InterPro" id="IPR013087">
    <property type="entry name" value="Znf_C2H2_type"/>
</dbReference>
<dbReference type="PANTHER" id="PTHR24390">
    <property type="entry name" value="ZINC FINGER PROTEIN"/>
    <property type="match status" value="1"/>
</dbReference>
<dbReference type="PANTHER" id="PTHR24390:SF260">
    <property type="entry name" value="ZINC FINGER PROTEIN 383-RELATED"/>
    <property type="match status" value="1"/>
</dbReference>
<dbReference type="Pfam" id="PF01352">
    <property type="entry name" value="KRAB"/>
    <property type="match status" value="1"/>
</dbReference>
<dbReference type="Pfam" id="PF00096">
    <property type="entry name" value="zf-C2H2"/>
    <property type="match status" value="5"/>
</dbReference>
<dbReference type="SMART" id="SM00349">
    <property type="entry name" value="KRAB"/>
    <property type="match status" value="1"/>
</dbReference>
<dbReference type="SMART" id="SM00355">
    <property type="entry name" value="ZnF_C2H2"/>
    <property type="match status" value="7"/>
</dbReference>
<dbReference type="SUPFAM" id="SSF57667">
    <property type="entry name" value="beta-beta-alpha zinc fingers"/>
    <property type="match status" value="4"/>
</dbReference>
<dbReference type="SUPFAM" id="SSF109640">
    <property type="entry name" value="KRAB domain (Kruppel-associated box)"/>
    <property type="match status" value="1"/>
</dbReference>
<dbReference type="PROSITE" id="PS50805">
    <property type="entry name" value="KRAB"/>
    <property type="match status" value="1"/>
</dbReference>
<dbReference type="PROSITE" id="PS00028">
    <property type="entry name" value="ZINC_FINGER_C2H2_1"/>
    <property type="match status" value="7"/>
</dbReference>
<dbReference type="PROSITE" id="PS50157">
    <property type="entry name" value="ZINC_FINGER_C2H2_2"/>
    <property type="match status" value="7"/>
</dbReference>
<accession>Q6ZSS3</accession>
<accession>Q14DC7</accession>
<accession>Q8TE91</accession>
<evidence type="ECO:0000255" key="1">
    <source>
        <dbReference type="PROSITE-ProRule" id="PRU00042"/>
    </source>
</evidence>
<evidence type="ECO:0000255" key="2">
    <source>
        <dbReference type="PROSITE-ProRule" id="PRU00119"/>
    </source>
</evidence>
<evidence type="ECO:0000303" key="3">
    <source>
    </source>
</evidence>
<evidence type="ECO:0000305" key="4"/>
<protein>
    <recommendedName>
        <fullName>Zinc finger protein 621</fullName>
    </recommendedName>
</protein>
<reference key="1">
    <citation type="journal article" date="2004" name="Nat. Genet.">
        <title>Complete sequencing and characterization of 21,243 full-length human cDNAs.</title>
        <authorList>
            <person name="Ota T."/>
            <person name="Suzuki Y."/>
            <person name="Nishikawa T."/>
            <person name="Otsuki T."/>
            <person name="Sugiyama T."/>
            <person name="Irie R."/>
            <person name="Wakamatsu A."/>
            <person name="Hayashi K."/>
            <person name="Sato H."/>
            <person name="Nagai K."/>
            <person name="Kimura K."/>
            <person name="Makita H."/>
            <person name="Sekine M."/>
            <person name="Obayashi M."/>
            <person name="Nishi T."/>
            <person name="Shibahara T."/>
            <person name="Tanaka T."/>
            <person name="Ishii S."/>
            <person name="Yamamoto J."/>
            <person name="Saito K."/>
            <person name="Kawai Y."/>
            <person name="Isono Y."/>
            <person name="Nakamura Y."/>
            <person name="Nagahari K."/>
            <person name="Murakami K."/>
            <person name="Yasuda T."/>
            <person name="Iwayanagi T."/>
            <person name="Wagatsuma M."/>
            <person name="Shiratori A."/>
            <person name="Sudo H."/>
            <person name="Hosoiri T."/>
            <person name="Kaku Y."/>
            <person name="Kodaira H."/>
            <person name="Kondo H."/>
            <person name="Sugawara M."/>
            <person name="Takahashi M."/>
            <person name="Kanda K."/>
            <person name="Yokoi T."/>
            <person name="Furuya T."/>
            <person name="Kikkawa E."/>
            <person name="Omura Y."/>
            <person name="Abe K."/>
            <person name="Kamihara K."/>
            <person name="Katsuta N."/>
            <person name="Sato K."/>
            <person name="Tanikawa M."/>
            <person name="Yamazaki M."/>
            <person name="Ninomiya K."/>
            <person name="Ishibashi T."/>
            <person name="Yamashita H."/>
            <person name="Murakawa K."/>
            <person name="Fujimori K."/>
            <person name="Tanai H."/>
            <person name="Kimata M."/>
            <person name="Watanabe M."/>
            <person name="Hiraoka S."/>
            <person name="Chiba Y."/>
            <person name="Ishida S."/>
            <person name="Ono Y."/>
            <person name="Takiguchi S."/>
            <person name="Watanabe S."/>
            <person name="Yosida M."/>
            <person name="Hotuta T."/>
            <person name="Kusano J."/>
            <person name="Kanehori K."/>
            <person name="Takahashi-Fujii A."/>
            <person name="Hara H."/>
            <person name="Tanase T.-O."/>
            <person name="Nomura Y."/>
            <person name="Togiya S."/>
            <person name="Komai F."/>
            <person name="Hara R."/>
            <person name="Takeuchi K."/>
            <person name="Arita M."/>
            <person name="Imose N."/>
            <person name="Musashino K."/>
            <person name="Yuuki H."/>
            <person name="Oshima A."/>
            <person name="Sasaki N."/>
            <person name="Aotsuka S."/>
            <person name="Yoshikawa Y."/>
            <person name="Matsunawa H."/>
            <person name="Ichihara T."/>
            <person name="Shiohata N."/>
            <person name="Sano S."/>
            <person name="Moriya S."/>
            <person name="Momiyama H."/>
            <person name="Satoh N."/>
            <person name="Takami S."/>
            <person name="Terashima Y."/>
            <person name="Suzuki O."/>
            <person name="Nakagawa S."/>
            <person name="Senoh A."/>
            <person name="Mizoguchi H."/>
            <person name="Goto Y."/>
            <person name="Shimizu F."/>
            <person name="Wakebe H."/>
            <person name="Hishigaki H."/>
            <person name="Watanabe T."/>
            <person name="Sugiyama A."/>
            <person name="Takemoto M."/>
            <person name="Kawakami B."/>
            <person name="Yamazaki M."/>
            <person name="Watanabe K."/>
            <person name="Kumagai A."/>
            <person name="Itakura S."/>
            <person name="Fukuzumi Y."/>
            <person name="Fujimori Y."/>
            <person name="Komiyama M."/>
            <person name="Tashiro H."/>
            <person name="Tanigami A."/>
            <person name="Fujiwara T."/>
            <person name="Ono T."/>
            <person name="Yamada K."/>
            <person name="Fujii Y."/>
            <person name="Ozaki K."/>
            <person name="Hirao M."/>
            <person name="Ohmori Y."/>
            <person name="Kawabata A."/>
            <person name="Hikiji T."/>
            <person name="Kobatake N."/>
            <person name="Inagaki H."/>
            <person name="Ikema Y."/>
            <person name="Okamoto S."/>
            <person name="Okitani R."/>
            <person name="Kawakami T."/>
            <person name="Noguchi S."/>
            <person name="Itoh T."/>
            <person name="Shigeta K."/>
            <person name="Senba T."/>
            <person name="Matsumura K."/>
            <person name="Nakajima Y."/>
            <person name="Mizuno T."/>
            <person name="Morinaga M."/>
            <person name="Sasaki M."/>
            <person name="Togashi T."/>
            <person name="Oyama M."/>
            <person name="Hata H."/>
            <person name="Watanabe M."/>
            <person name="Komatsu T."/>
            <person name="Mizushima-Sugano J."/>
            <person name="Satoh T."/>
            <person name="Shirai Y."/>
            <person name="Takahashi Y."/>
            <person name="Nakagawa K."/>
            <person name="Okumura K."/>
            <person name="Nagase T."/>
            <person name="Nomura N."/>
            <person name="Kikuchi H."/>
            <person name="Masuho Y."/>
            <person name="Yamashita R."/>
            <person name="Nakai K."/>
            <person name="Yada T."/>
            <person name="Nakamura Y."/>
            <person name="Ohara O."/>
            <person name="Isogai T."/>
            <person name="Sugano S."/>
        </authorList>
    </citation>
    <scope>NUCLEOTIDE SEQUENCE [LARGE SCALE MRNA] (ISOFORMS 1 AND 2)</scope>
    <source>
        <tissue>Corpus callosum</tissue>
        <tissue>Hepatoma</tissue>
    </source>
</reference>
<reference key="2">
    <citation type="journal article" date="2007" name="BMC Genomics">
        <title>The full-ORF clone resource of the German cDNA consortium.</title>
        <authorList>
            <person name="Bechtel S."/>
            <person name="Rosenfelder H."/>
            <person name="Duda A."/>
            <person name="Schmidt C.P."/>
            <person name="Ernst U."/>
            <person name="Wellenreuther R."/>
            <person name="Mehrle A."/>
            <person name="Schuster C."/>
            <person name="Bahr A."/>
            <person name="Bloecker H."/>
            <person name="Heubner D."/>
            <person name="Hoerlein A."/>
            <person name="Michel G."/>
            <person name="Wedler H."/>
            <person name="Koehrer K."/>
            <person name="Ottenwaelder B."/>
            <person name="Poustka A."/>
            <person name="Wiemann S."/>
            <person name="Schupp I."/>
        </authorList>
    </citation>
    <scope>NUCLEOTIDE SEQUENCE [LARGE SCALE MRNA] (ISOFORM 1)</scope>
    <source>
        <tissue>Fetal kidney</tissue>
    </source>
</reference>
<reference key="3">
    <citation type="journal article" date="2004" name="Genome Res.">
        <title>The status, quality, and expansion of the NIH full-length cDNA project: the Mammalian Gene Collection (MGC).</title>
        <authorList>
            <consortium name="The MGC Project Team"/>
        </authorList>
    </citation>
    <scope>NUCLEOTIDE SEQUENCE [LARGE SCALE MRNA] (ISOFORM 1)</scope>
    <source>
        <tissue>Liver</tissue>
    </source>
</reference>
<organism>
    <name type="scientific">Homo sapiens</name>
    <name type="common">Human</name>
    <dbReference type="NCBI Taxonomy" id="9606"/>
    <lineage>
        <taxon>Eukaryota</taxon>
        <taxon>Metazoa</taxon>
        <taxon>Chordata</taxon>
        <taxon>Craniata</taxon>
        <taxon>Vertebrata</taxon>
        <taxon>Euteleostomi</taxon>
        <taxon>Mammalia</taxon>
        <taxon>Eutheria</taxon>
        <taxon>Euarchontoglires</taxon>
        <taxon>Primates</taxon>
        <taxon>Haplorrhini</taxon>
        <taxon>Catarrhini</taxon>
        <taxon>Hominidae</taxon>
        <taxon>Homo</taxon>
    </lineage>
</organism>
<feature type="chain" id="PRO_0000047693" description="Zinc finger protein 621">
    <location>
        <begin position="1"/>
        <end position="439"/>
    </location>
</feature>
<feature type="domain" description="KRAB" evidence="2">
    <location>
        <begin position="11"/>
        <end position="83"/>
    </location>
</feature>
<feature type="zinc finger region" description="C2H2-type 1" evidence="1">
    <location>
        <begin position="151"/>
        <end position="173"/>
    </location>
</feature>
<feature type="zinc finger region" description="C2H2-type 2" evidence="1">
    <location>
        <begin position="179"/>
        <end position="201"/>
    </location>
</feature>
<feature type="zinc finger region" description="C2H2-type 3" evidence="1">
    <location>
        <begin position="207"/>
        <end position="229"/>
    </location>
</feature>
<feature type="zinc finger region" description="C2H2-type 4" evidence="1">
    <location>
        <begin position="235"/>
        <end position="257"/>
    </location>
</feature>
<feature type="zinc finger region" description="C2H2-type 5" evidence="1">
    <location>
        <begin position="263"/>
        <end position="285"/>
    </location>
</feature>
<feature type="zinc finger region" description="C2H2-type 6" evidence="1">
    <location>
        <begin position="291"/>
        <end position="313"/>
    </location>
</feature>
<feature type="zinc finger region" description="C2H2-type 7" evidence="1">
    <location>
        <begin position="319"/>
        <end position="341"/>
    </location>
</feature>
<feature type="splice variant" id="VSP_016041" description="In isoform 2." evidence="3">
    <original>MKFYECKECG</original>
    <variation>SVEVRSLRPA</variation>
    <location>
        <begin position="148"/>
        <end position="157"/>
    </location>
</feature>
<feature type="splice variant" id="VSP_016042" description="In isoform 2." evidence="3">
    <location>
        <begin position="158"/>
        <end position="439"/>
    </location>
</feature>